<evidence type="ECO:0000255" key="1">
    <source>
        <dbReference type="HAMAP-Rule" id="MF_00540"/>
    </source>
</evidence>
<evidence type="ECO:0000256" key="2">
    <source>
        <dbReference type="SAM" id="MobiDB-lite"/>
    </source>
</evidence>
<evidence type="ECO:0000269" key="3">
    <source>
    </source>
</evidence>
<evidence type="ECO:0000303" key="4">
    <source>
    </source>
</evidence>
<evidence type="ECO:0000305" key="5"/>
<gene>
    <name evidence="1" type="primary">add1</name>
    <name type="synonym">add5</name>
    <name type="ordered locus">SCO4901</name>
    <name type="ORF">2SCK8.27</name>
</gene>
<organism>
    <name type="scientific">Streptomyces coelicolor (strain ATCC BAA-471 / A3(2) / M145)</name>
    <dbReference type="NCBI Taxonomy" id="100226"/>
    <lineage>
        <taxon>Bacteria</taxon>
        <taxon>Bacillati</taxon>
        <taxon>Actinomycetota</taxon>
        <taxon>Actinomycetes</taxon>
        <taxon>Kitasatosporales</taxon>
        <taxon>Streptomycetaceae</taxon>
        <taxon>Streptomyces</taxon>
        <taxon>Streptomyces albidoflavus group</taxon>
    </lineage>
</organism>
<accession>Q9AK25</accession>
<protein>
    <recommendedName>
        <fullName evidence="1 4">Adenosine deaminase 1</fullName>
        <shortName evidence="5">ADA 1</shortName>
        <ecNumber evidence="1 3">3.5.4.4</ecNumber>
    </recommendedName>
    <alternativeName>
        <fullName evidence="1">Adenosine aminohydrolase 1</fullName>
    </alternativeName>
</protein>
<sequence length="396" mass="43961">MTSRSTEKSAAANPAAVSKTPSPDRIRRAPKVLLHDHLDGGLRPGTIVELARETGYGDLPETDADLLGTWFRQAADSGSLERYLETFSHTVGVMQTRDALVRVAAECAEDLAEDGVVYAEVRYAPEQHLEKGLTLEEVVEAVNEGFREGERRARDNGHRIRVGALLTAMRHAARSLEIAELANRYRDLGVVGFDIAGAEAGYPPTRHLDAFEYLKRENNHFTIHAGEAFGLPSIWQALQWCGADRLGHGVRIIDDIQVHEDGSVKLGRLASYVRDKRIPLELCPSSNLQTGAADSYAEHPIGLLRRLHFRATVNTDNRLMSHTSMSREFEHLVEAFGYTLDDMQWFSVNAMKSAFIPFDERLAMINDVIKPGYAELKSEWLFQQTASTSGSSESDG</sequence>
<comment type="function">
    <text evidence="1 3">Catalyzes the hydrolytic deamination of adenosine and 2-deoxyadenosine.</text>
</comment>
<comment type="catalytic activity">
    <reaction evidence="1 3">
        <text>adenosine + H2O + H(+) = inosine + NH4(+)</text>
        <dbReference type="Rhea" id="RHEA:24408"/>
        <dbReference type="ChEBI" id="CHEBI:15377"/>
        <dbReference type="ChEBI" id="CHEBI:15378"/>
        <dbReference type="ChEBI" id="CHEBI:16335"/>
        <dbReference type="ChEBI" id="CHEBI:17596"/>
        <dbReference type="ChEBI" id="CHEBI:28938"/>
        <dbReference type="EC" id="3.5.4.4"/>
    </reaction>
    <physiologicalReaction direction="left-to-right" evidence="1 3">
        <dbReference type="Rhea" id="RHEA:24409"/>
    </physiologicalReaction>
</comment>
<comment type="catalytic activity">
    <reaction evidence="1 3">
        <text>2'-deoxyadenosine + H2O + H(+) = 2'-deoxyinosine + NH4(+)</text>
        <dbReference type="Rhea" id="RHEA:28190"/>
        <dbReference type="ChEBI" id="CHEBI:15377"/>
        <dbReference type="ChEBI" id="CHEBI:15378"/>
        <dbReference type="ChEBI" id="CHEBI:17256"/>
        <dbReference type="ChEBI" id="CHEBI:28938"/>
        <dbReference type="ChEBI" id="CHEBI:28997"/>
        <dbReference type="EC" id="3.5.4.4"/>
    </reaction>
    <physiologicalReaction direction="left-to-right" evidence="1 3">
        <dbReference type="Rhea" id="RHEA:28191"/>
    </physiologicalReaction>
</comment>
<comment type="cofactor">
    <cofactor evidence="1 3">
        <name>Zn(2+)</name>
        <dbReference type="ChEBI" id="CHEBI:29105"/>
    </cofactor>
    <text evidence="1">Binds 1 zinc ion per subunit.</text>
</comment>
<comment type="activity regulation">
    <text evidence="3">Coformycin and 2'-deoxycoformycin, whose structures mimic the transition state of the deamination reaction, are potent competitive inhibitors.</text>
</comment>
<comment type="biophysicochemical properties">
    <kinetics>
        <KM evidence="3">29 uM for adenosine</KM>
        <KM evidence="3">560 uM for 2'-deoxyadenosine</KM>
        <Vmax evidence="3">15.4 umol/min/mg enzyme with adenosine as substrate</Vmax>
        <Vmax evidence="3">2.7 umol/min/mg enzyme with 2'-deoxyadenosine as substrate</Vmax>
        <text evidence="3">kcat is 11.5 sec(-1) with adenosine as substrate.</text>
    </kinetics>
</comment>
<comment type="subunit">
    <text evidence="3">Homotetramer.</text>
</comment>
<comment type="similarity">
    <text evidence="1">Belongs to the metallo-dependent hydrolases superfamily. Adenosine and AMP deaminases family. Adenosine deaminase subfamily.</text>
</comment>
<name>ADD1_STRCO</name>
<keyword id="KW-0378">Hydrolase</keyword>
<keyword id="KW-0479">Metal-binding</keyword>
<keyword id="KW-0546">Nucleotide metabolism</keyword>
<keyword id="KW-1185">Reference proteome</keyword>
<keyword id="KW-0862">Zinc</keyword>
<feature type="chain" id="PRO_0000194391" description="Adenosine deaminase 1">
    <location>
        <begin position="1"/>
        <end position="396"/>
    </location>
</feature>
<feature type="region of interest" description="Disordered" evidence="2">
    <location>
        <begin position="1"/>
        <end position="26"/>
    </location>
</feature>
<feature type="active site" description="Proton donor" evidence="1">
    <location>
        <position position="227"/>
    </location>
</feature>
<feature type="binding site" evidence="1">
    <location>
        <position position="35"/>
    </location>
    <ligand>
        <name>Zn(2+)</name>
        <dbReference type="ChEBI" id="CHEBI:29105"/>
        <note>catalytic</note>
    </ligand>
</feature>
<feature type="binding site" evidence="1">
    <location>
        <position position="37"/>
    </location>
    <ligand>
        <name>substrate</name>
    </ligand>
</feature>
<feature type="binding site" evidence="1">
    <location>
        <position position="37"/>
    </location>
    <ligand>
        <name>Zn(2+)</name>
        <dbReference type="ChEBI" id="CHEBI:29105"/>
        <note>catalytic</note>
    </ligand>
</feature>
<feature type="binding site" evidence="1">
    <location>
        <position position="39"/>
    </location>
    <ligand>
        <name>substrate</name>
    </ligand>
</feature>
<feature type="binding site" evidence="1">
    <location>
        <position position="197"/>
    </location>
    <ligand>
        <name>substrate</name>
    </ligand>
</feature>
<feature type="binding site" evidence="1">
    <location>
        <position position="224"/>
    </location>
    <ligand>
        <name>Zn(2+)</name>
        <dbReference type="ChEBI" id="CHEBI:29105"/>
        <note>catalytic</note>
    </ligand>
</feature>
<feature type="binding site" evidence="1">
    <location>
        <position position="316"/>
    </location>
    <ligand>
        <name>Zn(2+)</name>
        <dbReference type="ChEBI" id="CHEBI:29105"/>
        <note>catalytic</note>
    </ligand>
</feature>
<feature type="site" description="Important for catalytic activity" evidence="1">
    <location>
        <position position="248"/>
    </location>
</feature>
<proteinExistence type="evidence at protein level"/>
<dbReference type="EC" id="3.5.4.4" evidence="1 3"/>
<dbReference type="EMBL" id="AL939121">
    <property type="protein sequence ID" value="CAC33066.1"/>
    <property type="molecule type" value="Genomic_DNA"/>
</dbReference>
<dbReference type="RefSeq" id="NP_629054.1">
    <property type="nucleotide sequence ID" value="NC_003888.3"/>
</dbReference>
<dbReference type="RefSeq" id="WP_003974072.1">
    <property type="nucleotide sequence ID" value="NZ_VNID01000016.1"/>
</dbReference>
<dbReference type="SMR" id="Q9AK25"/>
<dbReference type="FunCoup" id="Q9AK25">
    <property type="interactions" value="301"/>
</dbReference>
<dbReference type="STRING" id="100226.gene:17762550"/>
<dbReference type="PaxDb" id="100226-SCO4901"/>
<dbReference type="KEGG" id="sco:SCO4901"/>
<dbReference type="PATRIC" id="fig|100226.15.peg.4980"/>
<dbReference type="eggNOG" id="COG1816">
    <property type="taxonomic scope" value="Bacteria"/>
</dbReference>
<dbReference type="HOGENOM" id="CLU_039228_0_0_11"/>
<dbReference type="InParanoid" id="Q9AK25"/>
<dbReference type="OrthoDB" id="9779574at2"/>
<dbReference type="PhylomeDB" id="Q9AK25"/>
<dbReference type="Proteomes" id="UP000001973">
    <property type="component" value="Chromosome"/>
</dbReference>
<dbReference type="GO" id="GO:0005829">
    <property type="term" value="C:cytosol"/>
    <property type="evidence" value="ECO:0000318"/>
    <property type="project" value="GO_Central"/>
</dbReference>
<dbReference type="GO" id="GO:0046936">
    <property type="term" value="F:2'-deoxyadenosine deaminase activity"/>
    <property type="evidence" value="ECO:0007669"/>
    <property type="project" value="RHEA"/>
</dbReference>
<dbReference type="GO" id="GO:0004000">
    <property type="term" value="F:adenosine deaminase activity"/>
    <property type="evidence" value="ECO:0000318"/>
    <property type="project" value="GO_Central"/>
</dbReference>
<dbReference type="GO" id="GO:0008270">
    <property type="term" value="F:zinc ion binding"/>
    <property type="evidence" value="ECO:0007669"/>
    <property type="project" value="UniProtKB-UniRule"/>
</dbReference>
<dbReference type="GO" id="GO:0006154">
    <property type="term" value="P:adenosine catabolic process"/>
    <property type="evidence" value="ECO:0000318"/>
    <property type="project" value="GO_Central"/>
</dbReference>
<dbReference type="GO" id="GO:0043103">
    <property type="term" value="P:hypoxanthine salvage"/>
    <property type="evidence" value="ECO:0000318"/>
    <property type="project" value="GO_Central"/>
</dbReference>
<dbReference type="GO" id="GO:0046103">
    <property type="term" value="P:inosine biosynthetic process"/>
    <property type="evidence" value="ECO:0000318"/>
    <property type="project" value="GO_Central"/>
</dbReference>
<dbReference type="GO" id="GO:0009117">
    <property type="term" value="P:nucleotide metabolic process"/>
    <property type="evidence" value="ECO:0007669"/>
    <property type="project" value="UniProtKB-KW"/>
</dbReference>
<dbReference type="GO" id="GO:0009168">
    <property type="term" value="P:purine ribonucleoside monophosphate biosynthetic process"/>
    <property type="evidence" value="ECO:0007669"/>
    <property type="project" value="UniProtKB-UniRule"/>
</dbReference>
<dbReference type="FunFam" id="3.20.20.140:FF:000020">
    <property type="entry name" value="Adenosine deaminase"/>
    <property type="match status" value="1"/>
</dbReference>
<dbReference type="Gene3D" id="3.20.20.140">
    <property type="entry name" value="Metal-dependent hydrolases"/>
    <property type="match status" value="1"/>
</dbReference>
<dbReference type="HAMAP" id="MF_00540">
    <property type="entry name" value="A_deaminase"/>
    <property type="match status" value="1"/>
</dbReference>
<dbReference type="InterPro" id="IPR028893">
    <property type="entry name" value="A_deaminase"/>
</dbReference>
<dbReference type="InterPro" id="IPR001365">
    <property type="entry name" value="A_deaminase_dom"/>
</dbReference>
<dbReference type="InterPro" id="IPR006330">
    <property type="entry name" value="Ado/ade_deaminase"/>
</dbReference>
<dbReference type="InterPro" id="IPR032466">
    <property type="entry name" value="Metal_Hydrolase"/>
</dbReference>
<dbReference type="NCBIfam" id="TIGR01430">
    <property type="entry name" value="aden_deam"/>
    <property type="match status" value="1"/>
</dbReference>
<dbReference type="NCBIfam" id="NF006847">
    <property type="entry name" value="PRK09358.1-2"/>
    <property type="match status" value="1"/>
</dbReference>
<dbReference type="PANTHER" id="PTHR11409">
    <property type="entry name" value="ADENOSINE DEAMINASE"/>
    <property type="match status" value="1"/>
</dbReference>
<dbReference type="PANTHER" id="PTHR11409:SF43">
    <property type="entry name" value="ADENOSINE DEAMINASE"/>
    <property type="match status" value="1"/>
</dbReference>
<dbReference type="Pfam" id="PF00962">
    <property type="entry name" value="A_deaminase"/>
    <property type="match status" value="1"/>
</dbReference>
<dbReference type="SUPFAM" id="SSF51556">
    <property type="entry name" value="Metallo-dependent hydrolases"/>
    <property type="match status" value="1"/>
</dbReference>
<reference key="1">
    <citation type="journal article" date="2002" name="Nature">
        <title>Complete genome sequence of the model actinomycete Streptomyces coelicolor A3(2).</title>
        <authorList>
            <person name="Bentley S.D."/>
            <person name="Chater K.F."/>
            <person name="Cerdeno-Tarraga A.-M."/>
            <person name="Challis G.L."/>
            <person name="Thomson N.R."/>
            <person name="James K.D."/>
            <person name="Harris D.E."/>
            <person name="Quail M.A."/>
            <person name="Kieser H."/>
            <person name="Harper D."/>
            <person name="Bateman A."/>
            <person name="Brown S."/>
            <person name="Chandra G."/>
            <person name="Chen C.W."/>
            <person name="Collins M."/>
            <person name="Cronin A."/>
            <person name="Fraser A."/>
            <person name="Goble A."/>
            <person name="Hidalgo J."/>
            <person name="Hornsby T."/>
            <person name="Howarth S."/>
            <person name="Huang C.-H."/>
            <person name="Kieser T."/>
            <person name="Larke L."/>
            <person name="Murphy L.D."/>
            <person name="Oliver K."/>
            <person name="O'Neil S."/>
            <person name="Rabbinowitsch E."/>
            <person name="Rajandream M.A."/>
            <person name="Rutherford K.M."/>
            <person name="Rutter S."/>
            <person name="Seeger K."/>
            <person name="Saunders D."/>
            <person name="Sharp S."/>
            <person name="Squares R."/>
            <person name="Squares S."/>
            <person name="Taylor K."/>
            <person name="Warren T."/>
            <person name="Wietzorrek A."/>
            <person name="Woodward J.R."/>
            <person name="Barrell B.G."/>
            <person name="Parkhill J."/>
            <person name="Hopwood D.A."/>
        </authorList>
    </citation>
    <scope>NUCLEOTIDE SEQUENCE [LARGE SCALE GENOMIC DNA]</scope>
    <source>
        <strain>ATCC BAA-471 / A3(2) / M145</strain>
    </source>
</reference>
<reference key="2">
    <citation type="journal article" date="2011" name="Protein Expr. Purif.">
        <title>Adenosine deaminase from Streptomyces coelicolor: recombinant expression, purification and characterization.</title>
        <authorList>
            <person name="Pornbanlualap S."/>
            <person name="Chalopagorn P."/>
        </authorList>
    </citation>
    <scope>FUNCTION</scope>
    <scope>CATALYTIC ACTIVITY</scope>
    <scope>COFACTOR</scope>
    <scope>ACTIVITY REGULATION</scope>
    <scope>BIOPHYSICOCHEMICAL PROPERTIES</scope>
    <scope>SUBUNIT</scope>
</reference>